<name>RS14_LACCB</name>
<dbReference type="EMBL" id="FM177140">
    <property type="protein sequence ID" value="CAQ67662.1"/>
    <property type="molecule type" value="Genomic_DNA"/>
</dbReference>
<dbReference type="SMR" id="B3WAE3"/>
<dbReference type="KEGG" id="lcb:LCABL_25960"/>
<dbReference type="HOGENOM" id="CLU_139869_0_0_9"/>
<dbReference type="GO" id="GO:0005737">
    <property type="term" value="C:cytoplasm"/>
    <property type="evidence" value="ECO:0007669"/>
    <property type="project" value="UniProtKB-ARBA"/>
</dbReference>
<dbReference type="GO" id="GO:0015935">
    <property type="term" value="C:small ribosomal subunit"/>
    <property type="evidence" value="ECO:0007669"/>
    <property type="project" value="TreeGrafter"/>
</dbReference>
<dbReference type="GO" id="GO:0019843">
    <property type="term" value="F:rRNA binding"/>
    <property type="evidence" value="ECO:0007669"/>
    <property type="project" value="UniProtKB-UniRule"/>
</dbReference>
<dbReference type="GO" id="GO:0003735">
    <property type="term" value="F:structural constituent of ribosome"/>
    <property type="evidence" value="ECO:0007669"/>
    <property type="project" value="InterPro"/>
</dbReference>
<dbReference type="GO" id="GO:0006412">
    <property type="term" value="P:translation"/>
    <property type="evidence" value="ECO:0007669"/>
    <property type="project" value="UniProtKB-UniRule"/>
</dbReference>
<dbReference type="Gene3D" id="4.10.830.10">
    <property type="entry name" value="30s Ribosomal Protein S14, Chain N"/>
    <property type="match status" value="1"/>
</dbReference>
<dbReference type="HAMAP" id="MF_00537">
    <property type="entry name" value="Ribosomal_uS14_1"/>
    <property type="match status" value="1"/>
</dbReference>
<dbReference type="InterPro" id="IPR001209">
    <property type="entry name" value="Ribosomal_uS14"/>
</dbReference>
<dbReference type="InterPro" id="IPR023036">
    <property type="entry name" value="Ribosomal_uS14_bac/plastid"/>
</dbReference>
<dbReference type="InterPro" id="IPR043140">
    <property type="entry name" value="Ribosomal_uS14_sf"/>
</dbReference>
<dbReference type="NCBIfam" id="NF006477">
    <property type="entry name" value="PRK08881.1"/>
    <property type="match status" value="1"/>
</dbReference>
<dbReference type="PANTHER" id="PTHR19836">
    <property type="entry name" value="30S RIBOSOMAL PROTEIN S14"/>
    <property type="match status" value="1"/>
</dbReference>
<dbReference type="PANTHER" id="PTHR19836:SF19">
    <property type="entry name" value="SMALL RIBOSOMAL SUBUNIT PROTEIN US14M"/>
    <property type="match status" value="1"/>
</dbReference>
<dbReference type="Pfam" id="PF00253">
    <property type="entry name" value="Ribosomal_S14"/>
    <property type="match status" value="1"/>
</dbReference>
<dbReference type="SUPFAM" id="SSF57716">
    <property type="entry name" value="Glucocorticoid receptor-like (DNA-binding domain)"/>
    <property type="match status" value="1"/>
</dbReference>
<sequence length="89" mass="10210">MAKKSKIAKAKRQEKLVKQYATKRAALKAKGDYIGLSKLPRDSSPVRLHHRDVLDGRPHAYMRKFGMSRLNFRELAHKGQIPGVRKASW</sequence>
<reference key="1">
    <citation type="submission" date="2008-06" db="EMBL/GenBank/DDBJ databases">
        <title>Lactobacillus casei BL23 complete genome sequence.</title>
        <authorList>
            <person name="Maze A."/>
            <person name="Boel G."/>
            <person name="Bourand A."/>
            <person name="Loux V."/>
            <person name="Gibrat J.F."/>
            <person name="Zuniga M."/>
            <person name="Hartke A."/>
            <person name="Deutscher J."/>
        </authorList>
    </citation>
    <scope>NUCLEOTIDE SEQUENCE [LARGE SCALE GENOMIC DNA]</scope>
    <source>
        <strain>BL23</strain>
    </source>
</reference>
<accession>B3WAE3</accession>
<feature type="chain" id="PRO_1000128429" description="Small ribosomal subunit protein uS14">
    <location>
        <begin position="1"/>
        <end position="89"/>
    </location>
</feature>
<evidence type="ECO:0000255" key="1">
    <source>
        <dbReference type="HAMAP-Rule" id="MF_00537"/>
    </source>
</evidence>
<evidence type="ECO:0000305" key="2"/>
<keyword id="KW-0687">Ribonucleoprotein</keyword>
<keyword id="KW-0689">Ribosomal protein</keyword>
<keyword id="KW-0694">RNA-binding</keyword>
<keyword id="KW-0699">rRNA-binding</keyword>
<comment type="function">
    <text evidence="1">Binds 16S rRNA, required for the assembly of 30S particles and may also be responsible for determining the conformation of the 16S rRNA at the A site.</text>
</comment>
<comment type="subunit">
    <text evidence="1">Part of the 30S ribosomal subunit. Contacts proteins S3 and S10.</text>
</comment>
<comment type="similarity">
    <text evidence="1">Belongs to the universal ribosomal protein uS14 family.</text>
</comment>
<protein>
    <recommendedName>
        <fullName evidence="1">Small ribosomal subunit protein uS14</fullName>
    </recommendedName>
    <alternativeName>
        <fullName evidence="2">30S ribosomal protein S14</fullName>
    </alternativeName>
</protein>
<organism>
    <name type="scientific">Lacticaseibacillus casei (strain BL23)</name>
    <name type="common">Lactobacillus casei</name>
    <dbReference type="NCBI Taxonomy" id="543734"/>
    <lineage>
        <taxon>Bacteria</taxon>
        <taxon>Bacillati</taxon>
        <taxon>Bacillota</taxon>
        <taxon>Bacilli</taxon>
        <taxon>Lactobacillales</taxon>
        <taxon>Lactobacillaceae</taxon>
        <taxon>Lacticaseibacillus</taxon>
    </lineage>
</organism>
<proteinExistence type="inferred from homology"/>
<gene>
    <name evidence="1" type="primary">rpsN</name>
    <name type="ordered locus">LCABL_25960</name>
</gene>